<gene>
    <name type="primary">opuCD</name>
</gene>
<organism>
    <name type="scientific">Listeria monocytogenes</name>
    <dbReference type="NCBI Taxonomy" id="1639"/>
    <lineage>
        <taxon>Bacteria</taxon>
        <taxon>Bacillati</taxon>
        <taxon>Bacillota</taxon>
        <taxon>Bacilli</taxon>
        <taxon>Bacillales</taxon>
        <taxon>Listeriaceae</taxon>
        <taxon>Listeria</taxon>
    </lineage>
</organism>
<sequence length="223" mass="23983">MDTLKQLIDYYQTNGSYVMEEFWRHFLMSAYGVIFAAIIAIPLGVYIARKKRLAGWVIQIANIIQTIPALAMLAVLMLIMGLGTNTVVLSLFLYSLLPILKNTYTGIRNVDGALLESGKAMGMTKWQVLRLIEMPLALSVIMAGIRNALVIAIGVAAIGTFVGAGGLGDIIVRGTNATNGTAIILAGAIPTAVMAILADVLLGWVERTLNPVKNKRKPLTEAL</sequence>
<comment type="function">
    <text evidence="2">Part of the ABC transporter complex OpuCABCD involved in carnitine uptake. Probably responsible for the translocation of the substrate across the membrane. Involved, with BetL and GbuABC, in osmoprotection and cryoprotection of Listeria.</text>
</comment>
<comment type="subunit">
    <text evidence="4">The complex is composed of two ATP-binding proteins (OpuCA), two transmembrane proteins (OpuCB and OpuCD) and a solute-binding protein (OpuCC).</text>
</comment>
<comment type="subcellular location">
    <subcellularLocation>
        <location evidence="3">Cell membrane</location>
        <topology evidence="1">Multi-pass membrane protein</topology>
    </subcellularLocation>
</comment>
<comment type="similarity">
    <text evidence="3">Belongs to the binding-protein-dependent transport system permease family.</text>
</comment>
<evidence type="ECO:0000255" key="1">
    <source>
        <dbReference type="PROSITE-ProRule" id="PRU00441"/>
    </source>
</evidence>
<evidence type="ECO:0000269" key="2">
    <source>
    </source>
</evidence>
<evidence type="ECO:0000305" key="3"/>
<evidence type="ECO:0000305" key="4">
    <source>
    </source>
</evidence>
<keyword id="KW-1003">Cell membrane</keyword>
<keyword id="KW-0472">Membrane</keyword>
<keyword id="KW-0346">Stress response</keyword>
<keyword id="KW-0812">Transmembrane</keyword>
<keyword id="KW-1133">Transmembrane helix</keyword>
<keyword id="KW-0813">Transport</keyword>
<dbReference type="EMBL" id="AF249729">
    <property type="protein sequence ID" value="AAF91342.1"/>
    <property type="molecule type" value="Genomic_DNA"/>
</dbReference>
<dbReference type="PIR" id="AI1252">
    <property type="entry name" value="AI1252"/>
</dbReference>
<dbReference type="RefSeq" id="WP_003721930.1">
    <property type="nucleotide sequence ID" value="NZ_WUEC01000001.1"/>
</dbReference>
<dbReference type="SMR" id="Q9KHT6"/>
<dbReference type="eggNOG" id="COG1174">
    <property type="taxonomic scope" value="Bacteria"/>
</dbReference>
<dbReference type="OMA" id="PIFENTV"/>
<dbReference type="GO" id="GO:0005886">
    <property type="term" value="C:plasma membrane"/>
    <property type="evidence" value="ECO:0007669"/>
    <property type="project" value="UniProtKB-SubCell"/>
</dbReference>
<dbReference type="GO" id="GO:0031460">
    <property type="term" value="P:glycine betaine transport"/>
    <property type="evidence" value="ECO:0007669"/>
    <property type="project" value="TreeGrafter"/>
</dbReference>
<dbReference type="GO" id="GO:0055085">
    <property type="term" value="P:transmembrane transport"/>
    <property type="evidence" value="ECO:0007669"/>
    <property type="project" value="InterPro"/>
</dbReference>
<dbReference type="CDD" id="cd06261">
    <property type="entry name" value="TM_PBP2"/>
    <property type="match status" value="1"/>
</dbReference>
<dbReference type="FunFam" id="1.10.3720.10:FF:000001">
    <property type="entry name" value="Glycine betaine ABC transporter, permease"/>
    <property type="match status" value="1"/>
</dbReference>
<dbReference type="Gene3D" id="1.10.3720.10">
    <property type="entry name" value="MetI-like"/>
    <property type="match status" value="1"/>
</dbReference>
<dbReference type="InterPro" id="IPR051204">
    <property type="entry name" value="ABC_transp_perm/SBD"/>
</dbReference>
<dbReference type="InterPro" id="IPR000515">
    <property type="entry name" value="MetI-like"/>
</dbReference>
<dbReference type="InterPro" id="IPR035906">
    <property type="entry name" value="MetI-like_sf"/>
</dbReference>
<dbReference type="PANTHER" id="PTHR30177">
    <property type="entry name" value="GLYCINE BETAINE/L-PROLINE TRANSPORT SYSTEM PERMEASE PROTEIN PROW"/>
    <property type="match status" value="1"/>
</dbReference>
<dbReference type="PANTHER" id="PTHR30177:SF4">
    <property type="entry name" value="OSMOPROTECTANT IMPORT PERMEASE PROTEIN OSMW"/>
    <property type="match status" value="1"/>
</dbReference>
<dbReference type="Pfam" id="PF00528">
    <property type="entry name" value="BPD_transp_1"/>
    <property type="match status" value="1"/>
</dbReference>
<dbReference type="SUPFAM" id="SSF161098">
    <property type="entry name" value="MetI-like"/>
    <property type="match status" value="1"/>
</dbReference>
<dbReference type="PROSITE" id="PS50928">
    <property type="entry name" value="ABC_TM1"/>
    <property type="match status" value="1"/>
</dbReference>
<proteinExistence type="evidence at protein level"/>
<accession>Q9KHT6</accession>
<feature type="chain" id="PRO_0000418136" description="Carnitine transport permease protein OpuCD">
    <location>
        <begin position="1"/>
        <end position="223"/>
    </location>
</feature>
<feature type="transmembrane region" description="Helical" evidence="1">
    <location>
        <begin position="27"/>
        <end position="47"/>
    </location>
</feature>
<feature type="transmembrane region" description="Helical" evidence="1">
    <location>
        <begin position="63"/>
        <end position="83"/>
    </location>
</feature>
<feature type="transmembrane region" description="Helical" evidence="1">
    <location>
        <begin position="87"/>
        <end position="107"/>
    </location>
</feature>
<feature type="transmembrane region" description="Helical" evidence="1">
    <location>
        <begin position="148"/>
        <end position="168"/>
    </location>
</feature>
<feature type="transmembrane region" description="Helical" evidence="1">
    <location>
        <begin position="182"/>
        <end position="202"/>
    </location>
</feature>
<feature type="domain" description="ABC transmembrane type-1" evidence="1">
    <location>
        <begin position="22"/>
        <end position="202"/>
    </location>
</feature>
<name>OPUCD_LISMN</name>
<reference key="1">
    <citation type="journal article" date="2000" name="Appl. Environ. Microbiol.">
        <title>Identification and characterization of an ATP binding cassette L-carnitine transporter in Listeria monocytogenes.</title>
        <authorList>
            <person name="Fraser K.R."/>
            <person name="Harvie D."/>
            <person name="Coote P.J."/>
            <person name="O'Byrne C.P."/>
        </authorList>
    </citation>
    <scope>NUCLEOTIDE SEQUENCE [GENOMIC DNA]</scope>
    <scope>FUNCTION</scope>
    <scope>SUBUNIT</scope>
    <source>
        <strain>EGD / Serotype 1/2a</strain>
    </source>
</reference>
<protein>
    <recommendedName>
        <fullName>Carnitine transport permease protein OpuCD</fullName>
    </recommendedName>
</protein>